<sequence>MGSKINPIGFRLGVNRDWEAKWYAARGYKETLNEDLRIRKFLDEKLKDASVSTVEIERAANRVNIAIHTARPGMVIGKGGAEVEALNKEINALTNKQVHINIVEIKKPDLEAKLVADGIARQLEARIAFRRASRQAAQRSMRAGAKGIKVQIAGRLNGADIARREWHTEGSVPLHTLRADIDYAWVNAFTTYGEIGVKVWINRGEILPGRKNQPAKRSKGGKK</sequence>
<feature type="chain" id="PRO_0000293808" description="Small ribosomal subunit protein uS3">
    <location>
        <begin position="1"/>
        <end position="223"/>
    </location>
</feature>
<feature type="domain" description="KH type-2" evidence="1">
    <location>
        <begin position="38"/>
        <end position="106"/>
    </location>
</feature>
<accession>Q1GBL2</accession>
<proteinExistence type="inferred from homology"/>
<protein>
    <recommendedName>
        <fullName evidence="1">Small ribosomal subunit protein uS3</fullName>
    </recommendedName>
    <alternativeName>
        <fullName evidence="2">30S ribosomal protein S3</fullName>
    </alternativeName>
</protein>
<gene>
    <name evidence="1" type="primary">rpsC</name>
    <name type="ordered locus">Ldb0402</name>
</gene>
<keyword id="KW-1185">Reference proteome</keyword>
<keyword id="KW-0687">Ribonucleoprotein</keyword>
<keyword id="KW-0689">Ribosomal protein</keyword>
<keyword id="KW-0694">RNA-binding</keyword>
<keyword id="KW-0699">rRNA-binding</keyword>
<dbReference type="EMBL" id="CR954253">
    <property type="protein sequence ID" value="CAI97237.1"/>
    <property type="molecule type" value="Genomic_DNA"/>
</dbReference>
<dbReference type="RefSeq" id="WP_003620836.1">
    <property type="nucleotide sequence ID" value="NZ_JQAV01000001.1"/>
</dbReference>
<dbReference type="SMR" id="Q1GBL2"/>
<dbReference type="STRING" id="390333.Ldb0402"/>
<dbReference type="KEGG" id="ldb:Ldb0402"/>
<dbReference type="PATRIC" id="fig|390333.13.peg.388"/>
<dbReference type="eggNOG" id="COG0092">
    <property type="taxonomic scope" value="Bacteria"/>
</dbReference>
<dbReference type="HOGENOM" id="CLU_058591_0_2_9"/>
<dbReference type="BioCyc" id="LDEL390333:LDB_RS01705-MONOMER"/>
<dbReference type="Proteomes" id="UP000001259">
    <property type="component" value="Chromosome"/>
</dbReference>
<dbReference type="GO" id="GO:0022627">
    <property type="term" value="C:cytosolic small ribosomal subunit"/>
    <property type="evidence" value="ECO:0007669"/>
    <property type="project" value="TreeGrafter"/>
</dbReference>
<dbReference type="GO" id="GO:0003729">
    <property type="term" value="F:mRNA binding"/>
    <property type="evidence" value="ECO:0007669"/>
    <property type="project" value="UniProtKB-UniRule"/>
</dbReference>
<dbReference type="GO" id="GO:0019843">
    <property type="term" value="F:rRNA binding"/>
    <property type="evidence" value="ECO:0007669"/>
    <property type="project" value="UniProtKB-UniRule"/>
</dbReference>
<dbReference type="GO" id="GO:0003735">
    <property type="term" value="F:structural constituent of ribosome"/>
    <property type="evidence" value="ECO:0007669"/>
    <property type="project" value="InterPro"/>
</dbReference>
<dbReference type="GO" id="GO:0006412">
    <property type="term" value="P:translation"/>
    <property type="evidence" value="ECO:0007669"/>
    <property type="project" value="UniProtKB-UniRule"/>
</dbReference>
<dbReference type="CDD" id="cd02412">
    <property type="entry name" value="KH-II_30S_S3"/>
    <property type="match status" value="1"/>
</dbReference>
<dbReference type="FunFam" id="3.30.300.20:FF:000001">
    <property type="entry name" value="30S ribosomal protein S3"/>
    <property type="match status" value="1"/>
</dbReference>
<dbReference type="Gene3D" id="3.30.300.20">
    <property type="match status" value="1"/>
</dbReference>
<dbReference type="Gene3D" id="3.30.1140.32">
    <property type="entry name" value="Ribosomal protein S3, C-terminal domain"/>
    <property type="match status" value="1"/>
</dbReference>
<dbReference type="HAMAP" id="MF_01309_B">
    <property type="entry name" value="Ribosomal_uS3_B"/>
    <property type="match status" value="1"/>
</dbReference>
<dbReference type="InterPro" id="IPR004087">
    <property type="entry name" value="KH_dom"/>
</dbReference>
<dbReference type="InterPro" id="IPR015946">
    <property type="entry name" value="KH_dom-like_a/b"/>
</dbReference>
<dbReference type="InterPro" id="IPR004044">
    <property type="entry name" value="KH_dom_type_2"/>
</dbReference>
<dbReference type="InterPro" id="IPR009019">
    <property type="entry name" value="KH_sf_prok-type"/>
</dbReference>
<dbReference type="InterPro" id="IPR036419">
    <property type="entry name" value="Ribosomal_S3_C_sf"/>
</dbReference>
<dbReference type="InterPro" id="IPR005704">
    <property type="entry name" value="Ribosomal_uS3_bac-typ"/>
</dbReference>
<dbReference type="InterPro" id="IPR001351">
    <property type="entry name" value="Ribosomal_uS3_C"/>
</dbReference>
<dbReference type="InterPro" id="IPR018280">
    <property type="entry name" value="Ribosomal_uS3_CS"/>
</dbReference>
<dbReference type="NCBIfam" id="TIGR01009">
    <property type="entry name" value="rpsC_bact"/>
    <property type="match status" value="1"/>
</dbReference>
<dbReference type="PANTHER" id="PTHR11760">
    <property type="entry name" value="30S/40S RIBOSOMAL PROTEIN S3"/>
    <property type="match status" value="1"/>
</dbReference>
<dbReference type="PANTHER" id="PTHR11760:SF19">
    <property type="entry name" value="SMALL RIBOSOMAL SUBUNIT PROTEIN US3C"/>
    <property type="match status" value="1"/>
</dbReference>
<dbReference type="Pfam" id="PF07650">
    <property type="entry name" value="KH_2"/>
    <property type="match status" value="1"/>
</dbReference>
<dbReference type="Pfam" id="PF00189">
    <property type="entry name" value="Ribosomal_S3_C"/>
    <property type="match status" value="1"/>
</dbReference>
<dbReference type="SMART" id="SM00322">
    <property type="entry name" value="KH"/>
    <property type="match status" value="1"/>
</dbReference>
<dbReference type="SUPFAM" id="SSF54814">
    <property type="entry name" value="Prokaryotic type KH domain (KH-domain type II)"/>
    <property type="match status" value="1"/>
</dbReference>
<dbReference type="SUPFAM" id="SSF54821">
    <property type="entry name" value="Ribosomal protein S3 C-terminal domain"/>
    <property type="match status" value="1"/>
</dbReference>
<dbReference type="PROSITE" id="PS50823">
    <property type="entry name" value="KH_TYPE_2"/>
    <property type="match status" value="1"/>
</dbReference>
<dbReference type="PROSITE" id="PS00548">
    <property type="entry name" value="RIBOSOMAL_S3"/>
    <property type="match status" value="1"/>
</dbReference>
<evidence type="ECO:0000255" key="1">
    <source>
        <dbReference type="HAMAP-Rule" id="MF_01309"/>
    </source>
</evidence>
<evidence type="ECO:0000305" key="2"/>
<organism>
    <name type="scientific">Lactobacillus delbrueckii subsp. bulgaricus (strain ATCC 11842 / DSM 20081 / BCRC 10696 / JCM 1002 / NBRC 13953 / NCIMB 11778 / NCTC 12712 / WDCM 00102 / Lb 14)</name>
    <dbReference type="NCBI Taxonomy" id="390333"/>
    <lineage>
        <taxon>Bacteria</taxon>
        <taxon>Bacillati</taxon>
        <taxon>Bacillota</taxon>
        <taxon>Bacilli</taxon>
        <taxon>Lactobacillales</taxon>
        <taxon>Lactobacillaceae</taxon>
        <taxon>Lactobacillus</taxon>
    </lineage>
</organism>
<comment type="function">
    <text evidence="1">Binds the lower part of the 30S subunit head. Binds mRNA in the 70S ribosome, positioning it for translation.</text>
</comment>
<comment type="subunit">
    <text evidence="1">Part of the 30S ribosomal subunit. Forms a tight complex with proteins S10 and S14.</text>
</comment>
<comment type="similarity">
    <text evidence="1">Belongs to the universal ribosomal protein uS3 family.</text>
</comment>
<reference key="1">
    <citation type="journal article" date="2006" name="Proc. Natl. Acad. Sci. U.S.A.">
        <title>The complete genome sequence of Lactobacillus bulgaricus reveals extensive and ongoing reductive evolution.</title>
        <authorList>
            <person name="van de Guchte M."/>
            <person name="Penaud S."/>
            <person name="Grimaldi C."/>
            <person name="Barbe V."/>
            <person name="Bryson K."/>
            <person name="Nicolas P."/>
            <person name="Robert C."/>
            <person name="Oztas S."/>
            <person name="Mangenot S."/>
            <person name="Couloux A."/>
            <person name="Loux V."/>
            <person name="Dervyn R."/>
            <person name="Bossy R."/>
            <person name="Bolotin A."/>
            <person name="Batto J.-M."/>
            <person name="Walunas T."/>
            <person name="Gibrat J.-F."/>
            <person name="Bessieres P."/>
            <person name="Weissenbach J."/>
            <person name="Ehrlich S.D."/>
            <person name="Maguin E."/>
        </authorList>
    </citation>
    <scope>NUCLEOTIDE SEQUENCE [LARGE SCALE GENOMIC DNA]</scope>
    <source>
        <strain>ATCC 11842 / DSM 20081 / BCRC 10696 / JCM 1002 / NBRC 13953 / NCIMB 11778 / NCTC 12712 / WDCM 00102 / Lb 14</strain>
    </source>
</reference>
<name>RS3_LACDA</name>